<reference key="1">
    <citation type="journal article" date="1996" name="Mol. Microbiol.">
        <title>The isolation and characterisation of genomic and cDNA clones coding for a cdc2-related kinase (ThCRK2) from the bovine protozoan parasite Theileria.</title>
        <authorList>
            <person name="Kinnaird J.H."/>
            <person name="Logan M."/>
            <person name="Kirvar E."/>
            <person name="Tait A."/>
            <person name="Carrington M."/>
        </authorList>
    </citation>
    <scope>NUCLEOTIDE SEQUENCE [MRNA]</scope>
    <source>
        <strain>Ankara</strain>
    </source>
</reference>
<reference key="2">
    <citation type="journal article" date="2005" name="Science">
        <title>Genome of the host-cell transforming parasite Theileria annulata compared with T. parva.</title>
        <authorList>
            <person name="Pain A."/>
            <person name="Renauld H."/>
            <person name="Berriman M."/>
            <person name="Murphy L."/>
            <person name="Yeats C.A."/>
            <person name="Weir W."/>
            <person name="Kerhornou A."/>
            <person name="Aslett M."/>
            <person name="Bishop R."/>
            <person name="Bouchier C."/>
            <person name="Cochet M."/>
            <person name="Coulson R.M.R."/>
            <person name="Cronin A."/>
            <person name="de Villiers E.P."/>
            <person name="Fraser A."/>
            <person name="Fosker N."/>
            <person name="Gardner M."/>
            <person name="Goble A."/>
            <person name="Griffiths-Jones S."/>
            <person name="Harris D.E."/>
            <person name="Katzer F."/>
            <person name="Larke N."/>
            <person name="Lord A."/>
            <person name="Maser P."/>
            <person name="McKellar S."/>
            <person name="Mooney P."/>
            <person name="Morton F."/>
            <person name="Nene V."/>
            <person name="O'Neil S."/>
            <person name="Price C."/>
            <person name="Quail M.A."/>
            <person name="Rabbinowitsch E."/>
            <person name="Rawlings N.D."/>
            <person name="Rutter S."/>
            <person name="Saunders D."/>
            <person name="Seeger K."/>
            <person name="Shah T."/>
            <person name="Squares R."/>
            <person name="Squares S."/>
            <person name="Tivey A."/>
            <person name="Walker A.R."/>
            <person name="Woodward J."/>
            <person name="Dobbelaere D.A.E."/>
            <person name="Langsley G."/>
            <person name="Rajandream M.A."/>
            <person name="McKeever D."/>
            <person name="Shiels B."/>
            <person name="Tait A."/>
            <person name="Barrell B.G."/>
            <person name="Hall N."/>
        </authorList>
    </citation>
    <scope>NUCLEOTIDE SEQUENCE [LARGE SCALE GENOMIC DNA]</scope>
    <source>
        <strain>Ankara</strain>
    </source>
</reference>
<comment type="function">
    <text evidence="1 3">Serine/threonine-protein kinase (By similarity). Involved in the control of the cell cycle. Required for entry into S-phase and mitosis (By similarity). Probable component of the kinase complex that phosphorylates the repetitive C-terminus of RNA polymerase II (By similarity).</text>
</comment>
<comment type="catalytic activity">
    <reaction evidence="3">
        <text>L-seryl-[protein] + ATP = O-phospho-L-seryl-[protein] + ADP + H(+)</text>
        <dbReference type="Rhea" id="RHEA:17989"/>
        <dbReference type="Rhea" id="RHEA-COMP:9863"/>
        <dbReference type="Rhea" id="RHEA-COMP:11604"/>
        <dbReference type="ChEBI" id="CHEBI:15378"/>
        <dbReference type="ChEBI" id="CHEBI:29999"/>
        <dbReference type="ChEBI" id="CHEBI:30616"/>
        <dbReference type="ChEBI" id="CHEBI:83421"/>
        <dbReference type="ChEBI" id="CHEBI:456216"/>
        <dbReference type="EC" id="2.7.11.22"/>
    </reaction>
</comment>
<comment type="catalytic activity">
    <reaction evidence="3">
        <text>L-threonyl-[protein] + ATP = O-phospho-L-threonyl-[protein] + ADP + H(+)</text>
        <dbReference type="Rhea" id="RHEA:46608"/>
        <dbReference type="Rhea" id="RHEA-COMP:11060"/>
        <dbReference type="Rhea" id="RHEA-COMP:11605"/>
        <dbReference type="ChEBI" id="CHEBI:15378"/>
        <dbReference type="ChEBI" id="CHEBI:30013"/>
        <dbReference type="ChEBI" id="CHEBI:30616"/>
        <dbReference type="ChEBI" id="CHEBI:61977"/>
        <dbReference type="ChEBI" id="CHEBI:456216"/>
        <dbReference type="EC" id="2.7.11.22"/>
    </reaction>
</comment>
<comment type="catalytic activity">
    <reaction evidence="3">
        <text>[DNA-directed RNA polymerase] + ATP = phospho-[DNA-directed RNA polymerase] + ADP + H(+)</text>
        <dbReference type="Rhea" id="RHEA:10216"/>
        <dbReference type="Rhea" id="RHEA-COMP:11321"/>
        <dbReference type="Rhea" id="RHEA-COMP:11322"/>
        <dbReference type="ChEBI" id="CHEBI:15378"/>
        <dbReference type="ChEBI" id="CHEBI:30616"/>
        <dbReference type="ChEBI" id="CHEBI:43176"/>
        <dbReference type="ChEBI" id="CHEBI:68546"/>
        <dbReference type="ChEBI" id="CHEBI:456216"/>
        <dbReference type="EC" id="2.7.11.23"/>
    </reaction>
</comment>
<comment type="cofactor">
    <cofactor evidence="3">
        <name>Mg(2+)</name>
        <dbReference type="ChEBI" id="CHEBI:18420"/>
    </cofactor>
</comment>
<comment type="activity regulation">
    <text evidence="2">Phosphorylation at Thr-14 or Tyr-15 inactivates the enzyme, while phosphorylation at Thr-158 activates it.</text>
</comment>
<comment type="subunit">
    <text evidence="3">May form a complex composed of at least the catalytic subunit CRK2 and a cyclin.</text>
</comment>
<comment type="subcellular location">
    <subcellularLocation>
        <location evidence="1">Cytoplasm</location>
    </subcellularLocation>
</comment>
<comment type="similarity">
    <text evidence="7">Belongs to the protein kinase superfamily. CMGC Ser/Thr protein kinase family. CDC2/CDKX subfamily.</text>
</comment>
<keyword id="KW-0067">ATP-binding</keyword>
<keyword id="KW-0131">Cell cycle</keyword>
<keyword id="KW-0132">Cell division</keyword>
<keyword id="KW-0963">Cytoplasm</keyword>
<keyword id="KW-0418">Kinase</keyword>
<keyword id="KW-0460">Magnesium</keyword>
<keyword id="KW-0479">Metal-binding</keyword>
<keyword id="KW-0498">Mitosis</keyword>
<keyword id="KW-0547">Nucleotide-binding</keyword>
<keyword id="KW-0597">Phosphoprotein</keyword>
<keyword id="KW-1185">Reference proteome</keyword>
<keyword id="KW-0723">Serine/threonine-protein kinase</keyword>
<keyword id="KW-0808">Transferase</keyword>
<evidence type="ECO:0000250" key="1">
    <source>
        <dbReference type="UniProtKB" id="P04551"/>
    </source>
</evidence>
<evidence type="ECO:0000250" key="2">
    <source>
        <dbReference type="UniProtKB" id="P24941"/>
    </source>
</evidence>
<evidence type="ECO:0000250" key="3">
    <source>
        <dbReference type="UniProtKB" id="P61075"/>
    </source>
</evidence>
<evidence type="ECO:0000255" key="4">
    <source>
        <dbReference type="PROSITE-ProRule" id="PRU00159"/>
    </source>
</evidence>
<evidence type="ECO:0000255" key="5">
    <source>
        <dbReference type="PROSITE-ProRule" id="PRU10027"/>
    </source>
</evidence>
<evidence type="ECO:0000303" key="6">
    <source>
    </source>
</evidence>
<evidence type="ECO:0000305" key="7"/>
<gene>
    <name evidence="6" type="primary">CRK2</name>
    <name type="ORF">TA06730</name>
</gene>
<accession>Q26671</accession>
<sequence>MRRYHKMEKIGEGTYGVVYKAQNNHGEICALKKIRVEEEDEGIPSTAIREISLLKELHHPNIVWLRDVIHSEKCLTLVFEYLDQDLKKLLDACDGGLEPTTAKSFLYQILRGISYCHDHRILHRDLKPQNLLINREGVLKLADFGLARAFAIPVRSYTHEVVTLWYRAPDVLMGSKKYSTAVDIWSVGCIFAEMINGVPLFPGISEQDQLKRIFKILGTPNVDSWPQVVNLPAYNPDFCYYEKQAWSSIVPKLNESGIDLISRMLQLDPVQRISAKEALKHDYFKDLHRPSEFLNGVH</sequence>
<protein>
    <recommendedName>
        <fullName evidence="7">Cyclin-dependent kinase 2 homolog</fullName>
        <ecNumber evidence="3">2.7.11.22</ecNumber>
        <ecNumber evidence="3">2.7.11.23</ecNumber>
    </recommendedName>
    <alternativeName>
        <fullName evidence="3">Cell division control protein 2 homolog</fullName>
    </alternativeName>
    <alternativeName>
        <fullName evidence="6">cdc2-related kinase 2</fullName>
    </alternativeName>
</protein>
<dbReference type="EC" id="2.7.11.22" evidence="3"/>
<dbReference type="EC" id="2.7.11.23" evidence="3"/>
<dbReference type="EMBL" id="X98768">
    <property type="protein sequence ID" value="CAA67306.1"/>
    <property type="molecule type" value="mRNA"/>
</dbReference>
<dbReference type="EMBL" id="CR940347">
    <property type="protein sequence ID" value="CAI73372.1"/>
    <property type="molecule type" value="Genomic_DNA"/>
</dbReference>
<dbReference type="RefSeq" id="XP_954049.1">
    <property type="nucleotide sequence ID" value="XM_948956.1"/>
</dbReference>
<dbReference type="SMR" id="Q26671"/>
<dbReference type="FunCoup" id="Q26671">
    <property type="interactions" value="248"/>
</dbReference>
<dbReference type="STRING" id="5874.Q26671"/>
<dbReference type="GeneID" id="3863999"/>
<dbReference type="KEGG" id="tan:TA06730"/>
<dbReference type="VEuPathDB" id="PiroplasmaDB:TA06730"/>
<dbReference type="eggNOG" id="KOG0594">
    <property type="taxonomic scope" value="Eukaryota"/>
</dbReference>
<dbReference type="InParanoid" id="Q26671"/>
<dbReference type="OMA" id="YLYQITR"/>
<dbReference type="OrthoDB" id="1732493at2759"/>
<dbReference type="Proteomes" id="UP000001950">
    <property type="component" value="Chromosome 1 part 1"/>
</dbReference>
<dbReference type="GO" id="GO:0005737">
    <property type="term" value="C:cytoplasm"/>
    <property type="evidence" value="ECO:0007669"/>
    <property type="project" value="UniProtKB-SubCell"/>
</dbReference>
<dbReference type="GO" id="GO:0005634">
    <property type="term" value="C:nucleus"/>
    <property type="evidence" value="ECO:0007669"/>
    <property type="project" value="TreeGrafter"/>
</dbReference>
<dbReference type="GO" id="GO:0005524">
    <property type="term" value="F:ATP binding"/>
    <property type="evidence" value="ECO:0007669"/>
    <property type="project" value="UniProtKB-KW"/>
</dbReference>
<dbReference type="GO" id="GO:0004693">
    <property type="term" value="F:cyclin-dependent protein serine/threonine kinase activity"/>
    <property type="evidence" value="ECO:0007669"/>
    <property type="project" value="UniProtKB-EC"/>
</dbReference>
<dbReference type="GO" id="GO:0046872">
    <property type="term" value="F:metal ion binding"/>
    <property type="evidence" value="ECO:0007669"/>
    <property type="project" value="UniProtKB-KW"/>
</dbReference>
<dbReference type="GO" id="GO:0106310">
    <property type="term" value="F:protein serine kinase activity"/>
    <property type="evidence" value="ECO:0007669"/>
    <property type="project" value="RHEA"/>
</dbReference>
<dbReference type="GO" id="GO:0008353">
    <property type="term" value="F:RNA polymerase II CTD heptapeptide repeat kinase activity"/>
    <property type="evidence" value="ECO:0007669"/>
    <property type="project" value="UniProtKB-EC"/>
</dbReference>
<dbReference type="GO" id="GO:0051301">
    <property type="term" value="P:cell division"/>
    <property type="evidence" value="ECO:0007669"/>
    <property type="project" value="UniProtKB-KW"/>
</dbReference>
<dbReference type="CDD" id="cd07829">
    <property type="entry name" value="STKc_CDK_like"/>
    <property type="match status" value="1"/>
</dbReference>
<dbReference type="FunFam" id="3.30.200.20:FF:000396">
    <property type="entry name" value="Cdc2-related kinase 2, putative"/>
    <property type="match status" value="1"/>
</dbReference>
<dbReference type="FunFam" id="1.10.510.10:FF:000184">
    <property type="entry name" value="cyclin-dependent kinase 5 homolog"/>
    <property type="match status" value="1"/>
</dbReference>
<dbReference type="Gene3D" id="3.30.200.20">
    <property type="entry name" value="Phosphorylase Kinase, domain 1"/>
    <property type="match status" value="1"/>
</dbReference>
<dbReference type="Gene3D" id="1.10.510.10">
    <property type="entry name" value="Transferase(Phosphotransferase) domain 1"/>
    <property type="match status" value="1"/>
</dbReference>
<dbReference type="InterPro" id="IPR050108">
    <property type="entry name" value="CDK"/>
</dbReference>
<dbReference type="InterPro" id="IPR011009">
    <property type="entry name" value="Kinase-like_dom_sf"/>
</dbReference>
<dbReference type="InterPro" id="IPR000719">
    <property type="entry name" value="Prot_kinase_dom"/>
</dbReference>
<dbReference type="InterPro" id="IPR017441">
    <property type="entry name" value="Protein_kinase_ATP_BS"/>
</dbReference>
<dbReference type="InterPro" id="IPR008271">
    <property type="entry name" value="Ser/Thr_kinase_AS"/>
</dbReference>
<dbReference type="PANTHER" id="PTHR24056">
    <property type="entry name" value="CELL DIVISION PROTEIN KINASE"/>
    <property type="match status" value="1"/>
</dbReference>
<dbReference type="PANTHER" id="PTHR24056:SF46">
    <property type="entry name" value="CYCLIN-DEPENDENT KINASE 5"/>
    <property type="match status" value="1"/>
</dbReference>
<dbReference type="Pfam" id="PF00069">
    <property type="entry name" value="Pkinase"/>
    <property type="match status" value="1"/>
</dbReference>
<dbReference type="SMART" id="SM00220">
    <property type="entry name" value="S_TKc"/>
    <property type="match status" value="1"/>
</dbReference>
<dbReference type="SUPFAM" id="SSF56112">
    <property type="entry name" value="Protein kinase-like (PK-like)"/>
    <property type="match status" value="1"/>
</dbReference>
<dbReference type="PROSITE" id="PS00107">
    <property type="entry name" value="PROTEIN_KINASE_ATP"/>
    <property type="match status" value="1"/>
</dbReference>
<dbReference type="PROSITE" id="PS50011">
    <property type="entry name" value="PROTEIN_KINASE_DOM"/>
    <property type="match status" value="1"/>
</dbReference>
<dbReference type="PROSITE" id="PS00108">
    <property type="entry name" value="PROTEIN_KINASE_ST"/>
    <property type="match status" value="1"/>
</dbReference>
<organism>
    <name type="scientific">Theileria annulata</name>
    <dbReference type="NCBI Taxonomy" id="5874"/>
    <lineage>
        <taxon>Eukaryota</taxon>
        <taxon>Sar</taxon>
        <taxon>Alveolata</taxon>
        <taxon>Apicomplexa</taxon>
        <taxon>Aconoidasida</taxon>
        <taxon>Piroplasmida</taxon>
        <taxon>Theileriidae</taxon>
        <taxon>Theileria</taxon>
    </lineage>
</organism>
<name>CDK2H_THEAN</name>
<feature type="chain" id="PRO_0000232673" description="Cyclin-dependent kinase 2 homolog">
    <location>
        <begin position="1"/>
        <end position="298"/>
    </location>
</feature>
<feature type="domain" description="Protein kinase" evidence="4">
    <location>
        <begin position="4"/>
        <end position="284"/>
    </location>
</feature>
<feature type="active site" description="Proton acceptor" evidence="4 5">
    <location>
        <position position="125"/>
    </location>
</feature>
<feature type="binding site" evidence="4">
    <location>
        <begin position="10"/>
        <end position="18"/>
    </location>
    <ligand>
        <name>ATP</name>
        <dbReference type="ChEBI" id="CHEBI:30616"/>
    </ligand>
</feature>
<feature type="binding site" evidence="4">
    <location>
        <position position="32"/>
    </location>
    <ligand>
        <name>ATP</name>
        <dbReference type="ChEBI" id="CHEBI:30616"/>
    </ligand>
</feature>
<feature type="modified residue" description="Phosphothreonine" evidence="2">
    <location>
        <position position="14"/>
    </location>
</feature>
<feature type="modified residue" description="Phosphotyrosine" evidence="2">
    <location>
        <position position="15"/>
    </location>
</feature>
<feature type="modified residue" description="Phosphothreonine" evidence="2">
    <location>
        <position position="158"/>
    </location>
</feature>
<proteinExistence type="evidence at transcript level"/>